<geneLocation type="chloroplast"/>
<proteinExistence type="inferred from homology"/>
<keyword id="KW-0148">Chlorophyll</keyword>
<keyword id="KW-0150">Chloroplast</keyword>
<keyword id="KW-0157">Chromophore</keyword>
<keyword id="KW-0472">Membrane</keyword>
<keyword id="KW-0602">Photosynthesis</keyword>
<keyword id="KW-0604">Photosystem II</keyword>
<keyword id="KW-0934">Plastid</keyword>
<keyword id="KW-1185">Reference proteome</keyword>
<keyword id="KW-0793">Thylakoid</keyword>
<keyword id="KW-0812">Transmembrane</keyword>
<keyword id="KW-1133">Transmembrane helix</keyword>
<feature type="chain" id="PRO_0000359799" description="Photosystem II CP47 reaction center protein">
    <location>
        <begin position="1"/>
        <end position="508"/>
    </location>
</feature>
<feature type="transmembrane region" description="Helical" evidence="1">
    <location>
        <begin position="21"/>
        <end position="36"/>
    </location>
</feature>
<feature type="transmembrane region" description="Helical" evidence="1">
    <location>
        <begin position="101"/>
        <end position="115"/>
    </location>
</feature>
<feature type="transmembrane region" description="Helical" evidence="1">
    <location>
        <begin position="140"/>
        <end position="156"/>
    </location>
</feature>
<feature type="transmembrane region" description="Helical" evidence="1">
    <location>
        <begin position="203"/>
        <end position="218"/>
    </location>
</feature>
<feature type="transmembrane region" description="Helical" evidence="1">
    <location>
        <begin position="237"/>
        <end position="252"/>
    </location>
</feature>
<feature type="transmembrane region" description="Helical" evidence="1">
    <location>
        <begin position="457"/>
        <end position="472"/>
    </location>
</feature>
<gene>
    <name evidence="1" type="primary">psbB</name>
</gene>
<protein>
    <recommendedName>
        <fullName evidence="1">Photosystem II CP47 reaction center protein</fullName>
    </recommendedName>
    <alternativeName>
        <fullName evidence="1">PSII 47 kDa protein</fullName>
    </alternativeName>
    <alternativeName>
        <fullName evidence="1">Protein CP-47</fullName>
    </alternativeName>
</protein>
<organism>
    <name type="scientific">Brachypodium distachyon</name>
    <name type="common">Purple false brome</name>
    <name type="synonym">Trachynia distachya</name>
    <dbReference type="NCBI Taxonomy" id="15368"/>
    <lineage>
        <taxon>Eukaryota</taxon>
        <taxon>Viridiplantae</taxon>
        <taxon>Streptophyta</taxon>
        <taxon>Embryophyta</taxon>
        <taxon>Tracheophyta</taxon>
        <taxon>Spermatophyta</taxon>
        <taxon>Magnoliopsida</taxon>
        <taxon>Liliopsida</taxon>
        <taxon>Poales</taxon>
        <taxon>Poaceae</taxon>
        <taxon>BOP clade</taxon>
        <taxon>Pooideae</taxon>
        <taxon>Stipodae</taxon>
        <taxon>Brachypodieae</taxon>
        <taxon>Brachypodium</taxon>
    </lineage>
</organism>
<reference key="1">
    <citation type="journal article" date="2008" name="BMC Res. Notes">
        <title>The complete chloroplast genome sequence of Brachypodium distachyon: sequence comparison and phylogenetic analysis of eight grass plastomes.</title>
        <authorList>
            <person name="Bortiri E."/>
            <person name="Coleman-Derr D."/>
            <person name="Lazo G.R."/>
            <person name="Anderson O.D."/>
            <person name="Gu Y.Q."/>
        </authorList>
    </citation>
    <scope>NUCLEOTIDE SEQUENCE [LARGE SCALE GENOMIC DNA]</scope>
    <source>
        <strain>cv. Bd21</strain>
    </source>
</reference>
<sequence>MGLPWYRVHTVVLNDPGRLLAVHIMHTALVSGWAGSMALYELAVFDPSDPVLDPMWRQGMFVIPFMTRLGITDSWGGWSISGGTVTNPGIWSYEGVAGTHIVFSGLCFLAAIWHWVYWDLAIFSDDRTGKPSLDLPKIFGIHLFLAGVACFGFGAFHVTGLYGPGIWVSDPYGLTGKVQAVNPAWGAEGFDPFVPGGIASHHIAAGTLGILAGLFHLSVRPPQRLYKGLRMGNIETVLSSSIAAVFFAAFVVAGTMWYGSATTPIELFGPTRYQWDQGYFQQEIYRRVSNGLSENLSLSEAWSKIPEKLAFYDYIGNNPAKGGLFRAGSMDNGDGIAVGWLGHPVFRDKEGRELFVRRMPTFFETFPVVLVDEEGIVRADVPFRRAESKYSVEQVGVTVEFYGGELNGVSYSDPATVKKYARRSQLGEIFELDRATLKSDGVFRSSPRGWFTFGHATFALLFFFGHIWHGARTLFRDVFAGIDPDLDAQVEFGTFQKVGDPTTRKQAV</sequence>
<name>PSBB_BRADI</name>
<evidence type="ECO:0000255" key="1">
    <source>
        <dbReference type="HAMAP-Rule" id="MF_01495"/>
    </source>
</evidence>
<accession>B3TN75</accession>
<comment type="function">
    <text evidence="1">One of the components of the core complex of photosystem II (PSII). It binds chlorophyll and helps catalyze the primary light-induced photochemical processes of PSII. PSII is a light-driven water:plastoquinone oxidoreductase, using light energy to abstract electrons from H(2)O, generating O(2) and a proton gradient subsequently used for ATP formation.</text>
</comment>
<comment type="cofactor">
    <text evidence="1">Binds multiple chlorophylls. PSII binds additional chlorophylls, carotenoids and specific lipids.</text>
</comment>
<comment type="subunit">
    <text evidence="1">PSII is composed of 1 copy each of membrane proteins PsbA, PsbB, PsbC, PsbD, PsbE, PsbF, PsbH, PsbI, PsbJ, PsbK, PsbL, PsbM, PsbT, PsbX, PsbY, PsbZ, Psb30/Ycf12, at least 3 peripheral proteins of the oxygen-evolving complex and a large number of cofactors. It forms dimeric complexes.</text>
</comment>
<comment type="subcellular location">
    <subcellularLocation>
        <location evidence="1">Plastid</location>
        <location evidence="1">Chloroplast thylakoid membrane</location>
        <topology evidence="1">Multi-pass membrane protein</topology>
    </subcellularLocation>
</comment>
<comment type="similarity">
    <text evidence="1">Belongs to the PsbB/PsbC family. PsbB subfamily.</text>
</comment>
<dbReference type="EMBL" id="EU325680">
    <property type="protein sequence ID" value="ACF08663.1"/>
    <property type="molecule type" value="Genomic_DNA"/>
</dbReference>
<dbReference type="RefSeq" id="YP_002000511.1">
    <property type="nucleotide sequence ID" value="NC_011032.1"/>
</dbReference>
<dbReference type="SMR" id="B3TN75"/>
<dbReference type="FunCoup" id="B3TN75">
    <property type="interactions" value="456"/>
</dbReference>
<dbReference type="STRING" id="15368.B3TN75"/>
<dbReference type="EnsemblPlants" id="KQK18187">
    <property type="protein sequence ID" value="KQK18187"/>
    <property type="gene ID" value="BRADI_1g05740v3"/>
</dbReference>
<dbReference type="GeneID" id="6439814"/>
<dbReference type="Gramene" id="KQK18187">
    <property type="protein sequence ID" value="KQK18187"/>
    <property type="gene ID" value="BRADI_1g05740v3"/>
</dbReference>
<dbReference type="KEGG" id="bdi:6439814"/>
<dbReference type="eggNOG" id="ENOG502QRV6">
    <property type="taxonomic scope" value="Eukaryota"/>
</dbReference>
<dbReference type="HOGENOM" id="CLU_028227_2_0_1"/>
<dbReference type="InParanoid" id="B3TN75"/>
<dbReference type="OMA" id="MLAAIWH"/>
<dbReference type="OrthoDB" id="582790at2759"/>
<dbReference type="Proteomes" id="UP000008810">
    <property type="component" value="Unplaced"/>
</dbReference>
<dbReference type="GO" id="GO:0009535">
    <property type="term" value="C:chloroplast thylakoid membrane"/>
    <property type="evidence" value="ECO:0007669"/>
    <property type="project" value="UniProtKB-SubCell"/>
</dbReference>
<dbReference type="GO" id="GO:0009523">
    <property type="term" value="C:photosystem II"/>
    <property type="evidence" value="ECO:0007669"/>
    <property type="project" value="UniProtKB-KW"/>
</dbReference>
<dbReference type="GO" id="GO:0016168">
    <property type="term" value="F:chlorophyll binding"/>
    <property type="evidence" value="ECO:0007669"/>
    <property type="project" value="UniProtKB-UniRule"/>
</dbReference>
<dbReference type="GO" id="GO:0045156">
    <property type="term" value="F:electron transporter, transferring electrons within the cyclic electron transport pathway of photosynthesis activity"/>
    <property type="evidence" value="ECO:0007669"/>
    <property type="project" value="InterPro"/>
</dbReference>
<dbReference type="GO" id="GO:0009772">
    <property type="term" value="P:photosynthetic electron transport in photosystem II"/>
    <property type="evidence" value="ECO:0007669"/>
    <property type="project" value="InterPro"/>
</dbReference>
<dbReference type="FunFam" id="3.10.680.10:FF:000001">
    <property type="entry name" value="Photosystem II CP47 reaction center protein"/>
    <property type="match status" value="1"/>
</dbReference>
<dbReference type="Gene3D" id="3.10.680.10">
    <property type="entry name" value="Photosystem II CP47 reaction center protein"/>
    <property type="match status" value="1"/>
</dbReference>
<dbReference type="HAMAP" id="MF_01495">
    <property type="entry name" value="PSII_PsbB_CP47"/>
    <property type="match status" value="1"/>
</dbReference>
<dbReference type="InterPro" id="IPR000932">
    <property type="entry name" value="PS_antenna-like"/>
</dbReference>
<dbReference type="InterPro" id="IPR036001">
    <property type="entry name" value="PS_II_antenna-like_sf"/>
</dbReference>
<dbReference type="InterPro" id="IPR017486">
    <property type="entry name" value="PSII_PsbB"/>
</dbReference>
<dbReference type="NCBIfam" id="TIGR03039">
    <property type="entry name" value="PS_II_CP47"/>
    <property type="match status" value="1"/>
</dbReference>
<dbReference type="PANTHER" id="PTHR33180">
    <property type="entry name" value="PHOTOSYSTEM II CP43 REACTION CENTER PROTEIN"/>
    <property type="match status" value="1"/>
</dbReference>
<dbReference type="PANTHER" id="PTHR33180:SF37">
    <property type="entry name" value="PHOTOSYSTEM II CP43 REACTION CENTER PROTEIN"/>
    <property type="match status" value="1"/>
</dbReference>
<dbReference type="Pfam" id="PF00421">
    <property type="entry name" value="PSII"/>
    <property type="match status" value="1"/>
</dbReference>
<dbReference type="SUPFAM" id="SSF161077">
    <property type="entry name" value="Photosystem II antenna protein-like"/>
    <property type="match status" value="1"/>
</dbReference>